<organism>
    <name type="scientific">Escherichia coli (strain K12 / MC4100 / BW2952)</name>
    <dbReference type="NCBI Taxonomy" id="595496"/>
    <lineage>
        <taxon>Bacteria</taxon>
        <taxon>Pseudomonadati</taxon>
        <taxon>Pseudomonadota</taxon>
        <taxon>Gammaproteobacteria</taxon>
        <taxon>Enterobacterales</taxon>
        <taxon>Enterobacteriaceae</taxon>
        <taxon>Escherichia</taxon>
    </lineage>
</organism>
<comment type="function">
    <text evidence="1">Converts N-acetylmannosamine-6-phosphate (ManNAc-6-P) to N-acetylglucosamine-6-phosphate (GlcNAc-6-P).</text>
</comment>
<comment type="catalytic activity">
    <reaction evidence="1">
        <text>an N-acyl-D-glucosamine 6-phosphate = an N-acyl-D-mannosamine 6-phosphate</text>
        <dbReference type="Rhea" id="RHEA:23932"/>
        <dbReference type="ChEBI" id="CHEBI:57599"/>
        <dbReference type="ChEBI" id="CHEBI:57666"/>
        <dbReference type="EC" id="5.1.3.9"/>
    </reaction>
</comment>
<comment type="pathway">
    <text evidence="1">Amino-sugar metabolism; N-acetylneuraminate degradation; D-fructose 6-phosphate from N-acetylneuraminate: step 3/5.</text>
</comment>
<comment type="similarity">
    <text evidence="1">Belongs to the NanE family.</text>
</comment>
<evidence type="ECO:0000255" key="1">
    <source>
        <dbReference type="HAMAP-Rule" id="MF_01235"/>
    </source>
</evidence>
<keyword id="KW-0119">Carbohydrate metabolism</keyword>
<keyword id="KW-0413">Isomerase</keyword>
<accession>C4ZSW1</accession>
<proteinExistence type="inferred from homology"/>
<feature type="chain" id="PRO_1000214033" description="Putative N-acetylmannosamine-6-phosphate 2-epimerase">
    <location>
        <begin position="1"/>
        <end position="229"/>
    </location>
</feature>
<gene>
    <name evidence="1" type="primary">nanE</name>
    <name type="ordered locus">BWG_2924</name>
</gene>
<protein>
    <recommendedName>
        <fullName evidence="1">Putative N-acetylmannosamine-6-phosphate 2-epimerase</fullName>
        <ecNumber evidence="1">5.1.3.9</ecNumber>
    </recommendedName>
    <alternativeName>
        <fullName evidence="1">ManNAc-6-P epimerase</fullName>
    </alternativeName>
</protein>
<sequence>MSLLAQLDQKIAANGGLIVSCQPVPDSPLDKPEIVAAMALAAEQAGAVAIRIEGVANLQATRAVVSVPIIGIVKRDLEDSPVRITAYIEDVDALAQAGADIIAIDGTDRPRPVPVETLLARIHHHGLLAMTDCSTPEDGLACQKLGAEIIGTTLSGYTTPETPEEPDLALVKTLSDAGCRVIAEGRYNTPAQAADAMRHGAWAVTVGSAITRLEHICQWYNTAMKKAVL</sequence>
<name>NANE_ECOBW</name>
<reference key="1">
    <citation type="journal article" date="2009" name="J. Bacteriol.">
        <title>Genomic sequencing reveals regulatory mutations and recombinational events in the widely used MC4100 lineage of Escherichia coli K-12.</title>
        <authorList>
            <person name="Ferenci T."/>
            <person name="Zhou Z."/>
            <person name="Betteridge T."/>
            <person name="Ren Y."/>
            <person name="Liu Y."/>
            <person name="Feng L."/>
            <person name="Reeves P.R."/>
            <person name="Wang L."/>
        </authorList>
    </citation>
    <scope>NUCLEOTIDE SEQUENCE [LARGE SCALE GENOMIC DNA]</scope>
    <source>
        <strain>K12 / MC4100 / BW2952</strain>
    </source>
</reference>
<dbReference type="EC" id="5.1.3.9" evidence="1"/>
<dbReference type="EMBL" id="CP001396">
    <property type="protein sequence ID" value="ACR64686.1"/>
    <property type="molecule type" value="Genomic_DNA"/>
</dbReference>
<dbReference type="RefSeq" id="WP_000054239.1">
    <property type="nucleotide sequence ID" value="NC_012759.1"/>
</dbReference>
<dbReference type="SMR" id="C4ZSW1"/>
<dbReference type="KEGG" id="ebw:BWG_2924"/>
<dbReference type="HOGENOM" id="CLU_086300_0_0_6"/>
<dbReference type="UniPathway" id="UPA00629">
    <property type="reaction ID" value="UER00682"/>
</dbReference>
<dbReference type="GO" id="GO:0005829">
    <property type="term" value="C:cytosol"/>
    <property type="evidence" value="ECO:0007669"/>
    <property type="project" value="TreeGrafter"/>
</dbReference>
<dbReference type="GO" id="GO:0047465">
    <property type="term" value="F:N-acylglucosamine-6-phosphate 2-epimerase activity"/>
    <property type="evidence" value="ECO:0007669"/>
    <property type="project" value="UniProtKB-EC"/>
</dbReference>
<dbReference type="GO" id="GO:0005975">
    <property type="term" value="P:carbohydrate metabolic process"/>
    <property type="evidence" value="ECO:0007669"/>
    <property type="project" value="UniProtKB-UniRule"/>
</dbReference>
<dbReference type="GO" id="GO:0006053">
    <property type="term" value="P:N-acetylmannosamine catabolic process"/>
    <property type="evidence" value="ECO:0007669"/>
    <property type="project" value="TreeGrafter"/>
</dbReference>
<dbReference type="GO" id="GO:0019262">
    <property type="term" value="P:N-acetylneuraminate catabolic process"/>
    <property type="evidence" value="ECO:0007669"/>
    <property type="project" value="UniProtKB-UniRule"/>
</dbReference>
<dbReference type="CDD" id="cd04729">
    <property type="entry name" value="NanE"/>
    <property type="match status" value="1"/>
</dbReference>
<dbReference type="FunFam" id="3.20.20.70:FF:000035">
    <property type="entry name" value="Putative N-acetylmannosamine-6-phosphate 2-epimerase"/>
    <property type="match status" value="1"/>
</dbReference>
<dbReference type="Gene3D" id="3.20.20.70">
    <property type="entry name" value="Aldolase class I"/>
    <property type="match status" value="1"/>
</dbReference>
<dbReference type="HAMAP" id="MF_01235">
    <property type="entry name" value="ManNAc6P_epimer"/>
    <property type="match status" value="1"/>
</dbReference>
<dbReference type="InterPro" id="IPR013785">
    <property type="entry name" value="Aldolase_TIM"/>
</dbReference>
<dbReference type="InterPro" id="IPR007260">
    <property type="entry name" value="NanE"/>
</dbReference>
<dbReference type="InterPro" id="IPR011060">
    <property type="entry name" value="RibuloseP-bd_barrel"/>
</dbReference>
<dbReference type="NCBIfam" id="NF002231">
    <property type="entry name" value="PRK01130.1"/>
    <property type="match status" value="1"/>
</dbReference>
<dbReference type="PANTHER" id="PTHR36204">
    <property type="entry name" value="N-ACETYLMANNOSAMINE-6-PHOSPHATE 2-EPIMERASE-RELATED"/>
    <property type="match status" value="1"/>
</dbReference>
<dbReference type="PANTHER" id="PTHR36204:SF1">
    <property type="entry name" value="N-ACETYLMANNOSAMINE-6-PHOSPHATE 2-EPIMERASE-RELATED"/>
    <property type="match status" value="1"/>
</dbReference>
<dbReference type="Pfam" id="PF04131">
    <property type="entry name" value="NanE"/>
    <property type="match status" value="1"/>
</dbReference>
<dbReference type="SUPFAM" id="SSF51366">
    <property type="entry name" value="Ribulose-phoshate binding barrel"/>
    <property type="match status" value="1"/>
</dbReference>